<keyword id="KW-0131">Cell cycle</keyword>
<keyword id="KW-0132">Cell division</keyword>
<keyword id="KW-0342">GTP-binding</keyword>
<keyword id="KW-0460">Magnesium</keyword>
<keyword id="KW-0479">Metal-binding</keyword>
<keyword id="KW-0547">Nucleotide-binding</keyword>
<keyword id="KW-0717">Septation</keyword>
<dbReference type="EMBL" id="BA000034">
    <property type="protein sequence ID" value="BAC64343.1"/>
    <property type="molecule type" value="Genomic_DNA"/>
</dbReference>
<dbReference type="SMR" id="P0DA93"/>
<dbReference type="KEGG" id="sps:SPs1248"/>
<dbReference type="HOGENOM" id="CLU_033732_3_0_9"/>
<dbReference type="GO" id="GO:0005829">
    <property type="term" value="C:cytosol"/>
    <property type="evidence" value="ECO:0007669"/>
    <property type="project" value="TreeGrafter"/>
</dbReference>
<dbReference type="GO" id="GO:0005525">
    <property type="term" value="F:GTP binding"/>
    <property type="evidence" value="ECO:0007669"/>
    <property type="project" value="UniProtKB-UniRule"/>
</dbReference>
<dbReference type="GO" id="GO:0046872">
    <property type="term" value="F:metal ion binding"/>
    <property type="evidence" value="ECO:0007669"/>
    <property type="project" value="UniProtKB-KW"/>
</dbReference>
<dbReference type="GO" id="GO:0000917">
    <property type="term" value="P:division septum assembly"/>
    <property type="evidence" value="ECO:0007669"/>
    <property type="project" value="UniProtKB-KW"/>
</dbReference>
<dbReference type="CDD" id="cd01876">
    <property type="entry name" value="YihA_EngB"/>
    <property type="match status" value="1"/>
</dbReference>
<dbReference type="FunFam" id="3.40.50.300:FF:000098">
    <property type="entry name" value="Probable GTP-binding protein EngB"/>
    <property type="match status" value="1"/>
</dbReference>
<dbReference type="Gene3D" id="3.40.50.300">
    <property type="entry name" value="P-loop containing nucleotide triphosphate hydrolases"/>
    <property type="match status" value="1"/>
</dbReference>
<dbReference type="HAMAP" id="MF_00321">
    <property type="entry name" value="GTPase_EngB"/>
    <property type="match status" value="1"/>
</dbReference>
<dbReference type="InterPro" id="IPR030393">
    <property type="entry name" value="G_ENGB_dom"/>
</dbReference>
<dbReference type="InterPro" id="IPR006073">
    <property type="entry name" value="GTP-bd"/>
</dbReference>
<dbReference type="InterPro" id="IPR019987">
    <property type="entry name" value="GTP-bd_ribosome_bio_YsxC"/>
</dbReference>
<dbReference type="InterPro" id="IPR027417">
    <property type="entry name" value="P-loop_NTPase"/>
</dbReference>
<dbReference type="InterPro" id="IPR005225">
    <property type="entry name" value="Small_GTP-bd"/>
</dbReference>
<dbReference type="NCBIfam" id="TIGR03598">
    <property type="entry name" value="GTPase_YsxC"/>
    <property type="match status" value="1"/>
</dbReference>
<dbReference type="NCBIfam" id="TIGR00231">
    <property type="entry name" value="small_GTP"/>
    <property type="match status" value="1"/>
</dbReference>
<dbReference type="PANTHER" id="PTHR11649:SF13">
    <property type="entry name" value="ENGB-TYPE G DOMAIN-CONTAINING PROTEIN"/>
    <property type="match status" value="1"/>
</dbReference>
<dbReference type="PANTHER" id="PTHR11649">
    <property type="entry name" value="MSS1/TRME-RELATED GTP-BINDING PROTEIN"/>
    <property type="match status" value="1"/>
</dbReference>
<dbReference type="Pfam" id="PF01926">
    <property type="entry name" value="MMR_HSR1"/>
    <property type="match status" value="1"/>
</dbReference>
<dbReference type="SUPFAM" id="SSF52540">
    <property type="entry name" value="P-loop containing nucleoside triphosphate hydrolases"/>
    <property type="match status" value="1"/>
</dbReference>
<dbReference type="PROSITE" id="PS51706">
    <property type="entry name" value="G_ENGB"/>
    <property type="match status" value="1"/>
</dbReference>
<feature type="chain" id="PRO_0000411334" description="Probable GTP-binding protein EngB">
    <location>
        <begin position="1"/>
        <end position="199"/>
    </location>
</feature>
<feature type="domain" description="EngB-type G" evidence="1">
    <location>
        <begin position="28"/>
        <end position="199"/>
    </location>
</feature>
<feature type="binding site" evidence="1">
    <location>
        <begin position="36"/>
        <end position="43"/>
    </location>
    <ligand>
        <name>GTP</name>
        <dbReference type="ChEBI" id="CHEBI:37565"/>
    </ligand>
</feature>
<feature type="binding site" evidence="1">
    <location>
        <position position="43"/>
    </location>
    <ligand>
        <name>Mg(2+)</name>
        <dbReference type="ChEBI" id="CHEBI:18420"/>
    </ligand>
</feature>
<feature type="binding site" evidence="1">
    <location>
        <begin position="63"/>
        <end position="67"/>
    </location>
    <ligand>
        <name>GTP</name>
        <dbReference type="ChEBI" id="CHEBI:37565"/>
    </ligand>
</feature>
<feature type="binding site" evidence="1">
    <location>
        <position position="65"/>
    </location>
    <ligand>
        <name>Mg(2+)</name>
        <dbReference type="ChEBI" id="CHEBI:18420"/>
    </ligand>
</feature>
<feature type="binding site" evidence="1">
    <location>
        <begin position="81"/>
        <end position="84"/>
    </location>
    <ligand>
        <name>GTP</name>
        <dbReference type="ChEBI" id="CHEBI:37565"/>
    </ligand>
</feature>
<feature type="binding site" evidence="1">
    <location>
        <begin position="148"/>
        <end position="151"/>
    </location>
    <ligand>
        <name>GTP</name>
        <dbReference type="ChEBI" id="CHEBI:37565"/>
    </ligand>
</feature>
<feature type="binding site" evidence="1">
    <location>
        <begin position="180"/>
        <end position="182"/>
    </location>
    <ligand>
        <name>GTP</name>
        <dbReference type="ChEBI" id="CHEBI:37565"/>
    </ligand>
</feature>
<reference key="1">
    <citation type="journal article" date="2003" name="Genome Res.">
        <title>Genome sequence of an M3 strain of Streptococcus pyogenes reveals a large-scale genomic rearrangement in invasive strains and new insights into phage evolution.</title>
        <authorList>
            <person name="Nakagawa I."/>
            <person name="Kurokawa K."/>
            <person name="Yamashita A."/>
            <person name="Nakata M."/>
            <person name="Tomiyasu Y."/>
            <person name="Okahashi N."/>
            <person name="Kawabata S."/>
            <person name="Yamazaki K."/>
            <person name="Shiba T."/>
            <person name="Yasunaga T."/>
            <person name="Hayashi H."/>
            <person name="Hattori M."/>
            <person name="Hamada S."/>
        </authorList>
    </citation>
    <scope>NUCLEOTIDE SEQUENCE [LARGE SCALE GENOMIC DNA]</scope>
    <source>
        <strain>SSI-1</strain>
    </source>
</reference>
<proteinExistence type="inferred from homology"/>
<organism>
    <name type="scientific">Streptococcus pyogenes serotype M3 (strain SSI-1)</name>
    <dbReference type="NCBI Taxonomy" id="193567"/>
    <lineage>
        <taxon>Bacteria</taxon>
        <taxon>Bacillati</taxon>
        <taxon>Bacillota</taxon>
        <taxon>Bacilli</taxon>
        <taxon>Lactobacillales</taxon>
        <taxon>Streptococcaceae</taxon>
        <taxon>Streptococcus</taxon>
    </lineage>
</organism>
<gene>
    <name evidence="1" type="primary">engB</name>
    <name type="ordered locus">SPs1248</name>
</gene>
<evidence type="ECO:0000255" key="1">
    <source>
        <dbReference type="HAMAP-Rule" id="MF_00321"/>
    </source>
</evidence>
<name>ENGB_STRPQ</name>
<sequence>MAEEQVLNTHNASILLSAANKSHYPQDDLPEIALAGRSNVGKSSFINTILGRKNLARTSSKPGKTQLLNFFNIDDKLRFVDVPGYGYAKVSKSERAKWGKMIEEYLTSRDNLRAVVSLVDLRHAPSKEDIQMYDFLKYYDIPVIVVATKADKIPHGKWNKHESVVKKALNFDKSDTFIVFSSVERIGIDDSWDAILEQV</sequence>
<comment type="function">
    <text evidence="1">Necessary for normal cell division and for the maintenance of normal septation.</text>
</comment>
<comment type="cofactor">
    <cofactor evidence="1">
        <name>Mg(2+)</name>
        <dbReference type="ChEBI" id="CHEBI:18420"/>
    </cofactor>
</comment>
<comment type="similarity">
    <text evidence="1">Belongs to the TRAFAC class TrmE-Era-EngA-EngB-Septin-like GTPase superfamily. EngB GTPase family.</text>
</comment>
<accession>P0DA93</accession>
<accession>Q8K7V8</accession>
<protein>
    <recommendedName>
        <fullName evidence="1">Probable GTP-binding protein EngB</fullName>
    </recommendedName>
</protein>